<name>RL28_STRZJ</name>
<dbReference type="EMBL" id="CP000919">
    <property type="protein sequence ID" value="ACO19859.1"/>
    <property type="molecule type" value="Genomic_DNA"/>
</dbReference>
<dbReference type="RefSeq" id="WP_001140948.1">
    <property type="nucleotide sequence ID" value="NC_012466.1"/>
</dbReference>
<dbReference type="SMR" id="C1CCK4"/>
<dbReference type="GeneID" id="93921138"/>
<dbReference type="KEGG" id="sjj:SPJ_0425"/>
<dbReference type="HOGENOM" id="CLU_064548_7_1_9"/>
<dbReference type="Proteomes" id="UP000002206">
    <property type="component" value="Chromosome"/>
</dbReference>
<dbReference type="GO" id="GO:1990904">
    <property type="term" value="C:ribonucleoprotein complex"/>
    <property type="evidence" value="ECO:0007669"/>
    <property type="project" value="UniProtKB-KW"/>
</dbReference>
<dbReference type="GO" id="GO:0005840">
    <property type="term" value="C:ribosome"/>
    <property type="evidence" value="ECO:0007669"/>
    <property type="project" value="UniProtKB-KW"/>
</dbReference>
<dbReference type="GO" id="GO:0003735">
    <property type="term" value="F:structural constituent of ribosome"/>
    <property type="evidence" value="ECO:0007669"/>
    <property type="project" value="InterPro"/>
</dbReference>
<dbReference type="GO" id="GO:0006412">
    <property type="term" value="P:translation"/>
    <property type="evidence" value="ECO:0007669"/>
    <property type="project" value="UniProtKB-UniRule"/>
</dbReference>
<dbReference type="Gene3D" id="2.30.170.40">
    <property type="entry name" value="Ribosomal protein L28/L24"/>
    <property type="match status" value="1"/>
</dbReference>
<dbReference type="HAMAP" id="MF_00373">
    <property type="entry name" value="Ribosomal_bL28"/>
    <property type="match status" value="1"/>
</dbReference>
<dbReference type="InterPro" id="IPR050096">
    <property type="entry name" value="Bacterial_rp_bL28"/>
</dbReference>
<dbReference type="InterPro" id="IPR026569">
    <property type="entry name" value="Ribosomal_bL28"/>
</dbReference>
<dbReference type="InterPro" id="IPR034704">
    <property type="entry name" value="Ribosomal_bL28/bL31-like_sf"/>
</dbReference>
<dbReference type="InterPro" id="IPR001383">
    <property type="entry name" value="Ribosomal_bL28_bact-type"/>
</dbReference>
<dbReference type="InterPro" id="IPR037147">
    <property type="entry name" value="Ribosomal_bL28_sf"/>
</dbReference>
<dbReference type="NCBIfam" id="TIGR00009">
    <property type="entry name" value="L28"/>
    <property type="match status" value="1"/>
</dbReference>
<dbReference type="PANTHER" id="PTHR39080">
    <property type="entry name" value="50S RIBOSOMAL PROTEIN L28"/>
    <property type="match status" value="1"/>
</dbReference>
<dbReference type="PANTHER" id="PTHR39080:SF1">
    <property type="entry name" value="LARGE RIBOSOMAL SUBUNIT PROTEIN BL28A"/>
    <property type="match status" value="1"/>
</dbReference>
<dbReference type="Pfam" id="PF00830">
    <property type="entry name" value="Ribosomal_L28"/>
    <property type="match status" value="1"/>
</dbReference>
<dbReference type="SUPFAM" id="SSF143800">
    <property type="entry name" value="L28p-like"/>
    <property type="match status" value="1"/>
</dbReference>
<sequence length="62" mass="6884">MAKVCYFTGRKTVSGNNRSHAMNQTKRAVKPNLQKVTVLIDGKPKKVWASARALKSGKVERV</sequence>
<feature type="chain" id="PRO_1000195943" description="Large ribosomal subunit protein bL28">
    <location>
        <begin position="1"/>
        <end position="62"/>
    </location>
</feature>
<accession>C1CCK4</accession>
<gene>
    <name evidence="1" type="primary">rpmB</name>
    <name type="ordered locus">SPJ_0425</name>
</gene>
<reference key="1">
    <citation type="journal article" date="2010" name="Genome Biol.">
        <title>Structure and dynamics of the pan-genome of Streptococcus pneumoniae and closely related species.</title>
        <authorList>
            <person name="Donati C."/>
            <person name="Hiller N.L."/>
            <person name="Tettelin H."/>
            <person name="Muzzi A."/>
            <person name="Croucher N.J."/>
            <person name="Angiuoli S.V."/>
            <person name="Oggioni M."/>
            <person name="Dunning Hotopp J.C."/>
            <person name="Hu F.Z."/>
            <person name="Riley D.R."/>
            <person name="Covacci A."/>
            <person name="Mitchell T.J."/>
            <person name="Bentley S.D."/>
            <person name="Kilian M."/>
            <person name="Ehrlich G.D."/>
            <person name="Rappuoli R."/>
            <person name="Moxon E.R."/>
            <person name="Masignani V."/>
        </authorList>
    </citation>
    <scope>NUCLEOTIDE SEQUENCE [LARGE SCALE GENOMIC DNA]</scope>
    <source>
        <strain>JJA</strain>
    </source>
</reference>
<proteinExistence type="inferred from homology"/>
<comment type="similarity">
    <text evidence="1">Belongs to the bacterial ribosomal protein bL28 family.</text>
</comment>
<protein>
    <recommendedName>
        <fullName evidence="1">Large ribosomal subunit protein bL28</fullName>
    </recommendedName>
    <alternativeName>
        <fullName evidence="2">50S ribosomal protein L28</fullName>
    </alternativeName>
</protein>
<organism>
    <name type="scientific">Streptococcus pneumoniae (strain JJA)</name>
    <dbReference type="NCBI Taxonomy" id="488222"/>
    <lineage>
        <taxon>Bacteria</taxon>
        <taxon>Bacillati</taxon>
        <taxon>Bacillota</taxon>
        <taxon>Bacilli</taxon>
        <taxon>Lactobacillales</taxon>
        <taxon>Streptococcaceae</taxon>
        <taxon>Streptococcus</taxon>
    </lineage>
</organism>
<keyword id="KW-0687">Ribonucleoprotein</keyword>
<keyword id="KW-0689">Ribosomal protein</keyword>
<evidence type="ECO:0000255" key="1">
    <source>
        <dbReference type="HAMAP-Rule" id="MF_00373"/>
    </source>
</evidence>
<evidence type="ECO:0000305" key="2"/>